<proteinExistence type="inferred from homology"/>
<comment type="function">
    <text evidence="1">NDH-1 shuttles electrons from NADH, via FMN and iron-sulfur (Fe-S) centers, to quinones in the respiratory chain. The immediate electron acceptor for the enzyme in this species is believed to be ubiquinone. Couples the redox reaction to proton translocation (for every two electrons transferred, four hydrogen ions are translocated across the cytoplasmic membrane), and thus conserves the redox energy in a proton gradient. This subunit may bind ubiquinone.</text>
</comment>
<comment type="catalytic activity">
    <reaction evidence="1">
        <text>a quinone + NADH + 5 H(+)(in) = a quinol + NAD(+) + 4 H(+)(out)</text>
        <dbReference type="Rhea" id="RHEA:57888"/>
        <dbReference type="ChEBI" id="CHEBI:15378"/>
        <dbReference type="ChEBI" id="CHEBI:24646"/>
        <dbReference type="ChEBI" id="CHEBI:57540"/>
        <dbReference type="ChEBI" id="CHEBI:57945"/>
        <dbReference type="ChEBI" id="CHEBI:132124"/>
    </reaction>
</comment>
<comment type="subunit">
    <text evidence="1">NDH-1 is composed of 13 different subunits. Subunits NuoA, H, J, K, L, M, N constitute the membrane sector of the complex.</text>
</comment>
<comment type="subcellular location">
    <subcellularLocation>
        <location evidence="1">Cell inner membrane</location>
        <topology evidence="1">Multi-pass membrane protein</topology>
    </subcellularLocation>
</comment>
<comment type="similarity">
    <text evidence="1">Belongs to the complex I subunit 1 family.</text>
</comment>
<keyword id="KW-0997">Cell inner membrane</keyword>
<keyword id="KW-1003">Cell membrane</keyword>
<keyword id="KW-0472">Membrane</keyword>
<keyword id="KW-0520">NAD</keyword>
<keyword id="KW-0874">Quinone</keyword>
<keyword id="KW-1185">Reference proteome</keyword>
<keyword id="KW-1278">Translocase</keyword>
<keyword id="KW-0812">Transmembrane</keyword>
<keyword id="KW-1133">Transmembrane helix</keyword>
<keyword id="KW-0830">Ubiquinone</keyword>
<reference key="1">
    <citation type="submission" date="2007-08" db="EMBL/GenBank/DDBJ databases">
        <authorList>
            <consortium name="The Citrobacter koseri Genome Sequencing Project"/>
            <person name="McClelland M."/>
            <person name="Sanderson E.K."/>
            <person name="Porwollik S."/>
            <person name="Spieth J."/>
            <person name="Clifton W.S."/>
            <person name="Latreille P."/>
            <person name="Courtney L."/>
            <person name="Wang C."/>
            <person name="Pepin K."/>
            <person name="Bhonagiri V."/>
            <person name="Nash W."/>
            <person name="Johnson M."/>
            <person name="Thiruvilangam P."/>
            <person name="Wilson R."/>
        </authorList>
    </citation>
    <scope>NUCLEOTIDE SEQUENCE [LARGE SCALE GENOMIC DNA]</scope>
    <source>
        <strain>ATCC BAA-895 / CDC 4225-83 / SGSC4696</strain>
    </source>
</reference>
<organism>
    <name type="scientific">Citrobacter koseri (strain ATCC BAA-895 / CDC 4225-83 / SGSC4696)</name>
    <dbReference type="NCBI Taxonomy" id="290338"/>
    <lineage>
        <taxon>Bacteria</taxon>
        <taxon>Pseudomonadati</taxon>
        <taxon>Pseudomonadota</taxon>
        <taxon>Gammaproteobacteria</taxon>
        <taxon>Enterobacterales</taxon>
        <taxon>Enterobacteriaceae</taxon>
        <taxon>Citrobacter</taxon>
    </lineage>
</organism>
<accession>A8ADV7</accession>
<evidence type="ECO:0000255" key="1">
    <source>
        <dbReference type="HAMAP-Rule" id="MF_01350"/>
    </source>
</evidence>
<gene>
    <name evidence="1" type="primary">nuoH</name>
    <name type="ordered locus">CKO_00514</name>
</gene>
<sequence>MSWITPDLIEILLSILKAVVILLVVVTCGAFMSFGERRLLGLFQNRYGPNRVGWGGSLQLVADMIKMFFKEDWIPKFSDRVIFTLAPMIAFTSLLLAFAIVPVSPTWVVADLNIGILFFLMMAGLAVYAVLFAGWSSNNKYSLLGAMRASAQTLSYEVFLGLSLMGVVAQAGSFNMTDIVNNQADIWNVIPQFFGFVTFAIAGVAVCHRHPFDQPEAEQELADGYHIEYSGMKFGLFFVGEYIGIVTISALMVTLFFGGWHGPFLPPFIWFALKTAFFMMMFILIRASLPRPRYDQVMSFGWKVCLPLTLINLLVTAAVILWQAQ</sequence>
<dbReference type="EC" id="7.1.1.-" evidence="1"/>
<dbReference type="EMBL" id="CP000822">
    <property type="protein sequence ID" value="ABV11670.1"/>
    <property type="molecule type" value="Genomic_DNA"/>
</dbReference>
<dbReference type="RefSeq" id="WP_012131496.1">
    <property type="nucleotide sequence ID" value="NC_009792.1"/>
</dbReference>
<dbReference type="SMR" id="A8ADV7"/>
<dbReference type="STRING" id="290338.CKO_00514"/>
<dbReference type="GeneID" id="45134756"/>
<dbReference type="KEGG" id="cko:CKO_00514"/>
<dbReference type="HOGENOM" id="CLU_015134_0_1_6"/>
<dbReference type="OrthoDB" id="9803734at2"/>
<dbReference type="Proteomes" id="UP000008148">
    <property type="component" value="Chromosome"/>
</dbReference>
<dbReference type="GO" id="GO:0005886">
    <property type="term" value="C:plasma membrane"/>
    <property type="evidence" value="ECO:0007669"/>
    <property type="project" value="UniProtKB-SubCell"/>
</dbReference>
<dbReference type="GO" id="GO:0003954">
    <property type="term" value="F:NADH dehydrogenase activity"/>
    <property type="evidence" value="ECO:0007669"/>
    <property type="project" value="TreeGrafter"/>
</dbReference>
<dbReference type="GO" id="GO:0016655">
    <property type="term" value="F:oxidoreductase activity, acting on NAD(P)H, quinone or similar compound as acceptor"/>
    <property type="evidence" value="ECO:0007669"/>
    <property type="project" value="UniProtKB-UniRule"/>
</dbReference>
<dbReference type="GO" id="GO:0048038">
    <property type="term" value="F:quinone binding"/>
    <property type="evidence" value="ECO:0007669"/>
    <property type="project" value="UniProtKB-KW"/>
</dbReference>
<dbReference type="GO" id="GO:0009060">
    <property type="term" value="P:aerobic respiration"/>
    <property type="evidence" value="ECO:0007669"/>
    <property type="project" value="TreeGrafter"/>
</dbReference>
<dbReference type="HAMAP" id="MF_01350">
    <property type="entry name" value="NDH1_NuoH"/>
    <property type="match status" value="1"/>
</dbReference>
<dbReference type="InterPro" id="IPR001694">
    <property type="entry name" value="NADH_UbQ_OxRdtase_su1/FPO"/>
</dbReference>
<dbReference type="InterPro" id="IPR018086">
    <property type="entry name" value="NADH_UbQ_OxRdtase_su1_CS"/>
</dbReference>
<dbReference type="NCBIfam" id="NF004740">
    <property type="entry name" value="PRK06076.1-1"/>
    <property type="match status" value="1"/>
</dbReference>
<dbReference type="NCBIfam" id="NF004741">
    <property type="entry name" value="PRK06076.1-2"/>
    <property type="match status" value="1"/>
</dbReference>
<dbReference type="PANTHER" id="PTHR11432">
    <property type="entry name" value="NADH DEHYDROGENASE SUBUNIT 1"/>
    <property type="match status" value="1"/>
</dbReference>
<dbReference type="PANTHER" id="PTHR11432:SF3">
    <property type="entry name" value="NADH-UBIQUINONE OXIDOREDUCTASE CHAIN 1"/>
    <property type="match status" value="1"/>
</dbReference>
<dbReference type="Pfam" id="PF00146">
    <property type="entry name" value="NADHdh"/>
    <property type="match status" value="1"/>
</dbReference>
<dbReference type="PROSITE" id="PS00667">
    <property type="entry name" value="COMPLEX1_ND1_1"/>
    <property type="match status" value="1"/>
</dbReference>
<dbReference type="PROSITE" id="PS00668">
    <property type="entry name" value="COMPLEX1_ND1_2"/>
    <property type="match status" value="1"/>
</dbReference>
<feature type="chain" id="PRO_1000067740" description="NADH-quinone oxidoreductase subunit H">
    <location>
        <begin position="1"/>
        <end position="325"/>
    </location>
</feature>
<feature type="transmembrane region" description="Helical" evidence="1">
    <location>
        <begin position="11"/>
        <end position="31"/>
    </location>
</feature>
<feature type="transmembrane region" description="Helical" evidence="1">
    <location>
        <begin position="50"/>
        <end position="69"/>
    </location>
</feature>
<feature type="transmembrane region" description="Helical" evidence="1">
    <location>
        <begin position="81"/>
        <end position="101"/>
    </location>
</feature>
<feature type="transmembrane region" description="Helical" evidence="1">
    <location>
        <begin position="114"/>
        <end position="134"/>
    </location>
</feature>
<feature type="transmembrane region" description="Helical" evidence="1">
    <location>
        <begin position="154"/>
        <end position="174"/>
    </location>
</feature>
<feature type="transmembrane region" description="Helical" evidence="1">
    <location>
        <begin position="186"/>
        <end position="206"/>
    </location>
</feature>
<feature type="transmembrane region" description="Helical" evidence="1">
    <location>
        <begin position="237"/>
        <end position="257"/>
    </location>
</feature>
<feature type="transmembrane region" description="Helical" evidence="1">
    <location>
        <begin position="265"/>
        <end position="285"/>
    </location>
</feature>
<feature type="transmembrane region" description="Helical" evidence="1">
    <location>
        <begin position="304"/>
        <end position="324"/>
    </location>
</feature>
<name>NUOH_CITK8</name>
<protein>
    <recommendedName>
        <fullName evidence="1">NADH-quinone oxidoreductase subunit H</fullName>
        <ecNumber evidence="1">7.1.1.-</ecNumber>
    </recommendedName>
    <alternativeName>
        <fullName evidence="1">NADH dehydrogenase I subunit H</fullName>
    </alternativeName>
    <alternativeName>
        <fullName evidence="1">NDH-1 subunit H</fullName>
    </alternativeName>
</protein>